<organism>
    <name type="scientific">Methylobacterium nodulans (strain LMG 21967 / CNCM I-2342 / ORS 2060)</name>
    <dbReference type="NCBI Taxonomy" id="460265"/>
    <lineage>
        <taxon>Bacteria</taxon>
        <taxon>Pseudomonadati</taxon>
        <taxon>Pseudomonadota</taxon>
        <taxon>Alphaproteobacteria</taxon>
        <taxon>Hyphomicrobiales</taxon>
        <taxon>Methylobacteriaceae</taxon>
        <taxon>Methylobacterium</taxon>
    </lineage>
</organism>
<gene>
    <name evidence="1" type="primary">clpX</name>
    <name type="ordered locus">Mnod_7406</name>
</gene>
<feature type="chain" id="PRO_1000123841" description="ATP-dependent Clp protease ATP-binding subunit ClpX">
    <location>
        <begin position="1"/>
        <end position="423"/>
    </location>
</feature>
<feature type="domain" description="ClpX-type ZB" evidence="2">
    <location>
        <begin position="3"/>
        <end position="56"/>
    </location>
</feature>
<feature type="binding site" evidence="2">
    <location>
        <position position="15"/>
    </location>
    <ligand>
        <name>Zn(2+)</name>
        <dbReference type="ChEBI" id="CHEBI:29105"/>
    </ligand>
</feature>
<feature type="binding site" evidence="2">
    <location>
        <position position="18"/>
    </location>
    <ligand>
        <name>Zn(2+)</name>
        <dbReference type="ChEBI" id="CHEBI:29105"/>
    </ligand>
</feature>
<feature type="binding site" evidence="2">
    <location>
        <position position="37"/>
    </location>
    <ligand>
        <name>Zn(2+)</name>
        <dbReference type="ChEBI" id="CHEBI:29105"/>
    </ligand>
</feature>
<feature type="binding site" evidence="2">
    <location>
        <position position="40"/>
    </location>
    <ligand>
        <name>Zn(2+)</name>
        <dbReference type="ChEBI" id="CHEBI:29105"/>
    </ligand>
</feature>
<feature type="binding site" evidence="1">
    <location>
        <begin position="119"/>
        <end position="126"/>
    </location>
    <ligand>
        <name>ATP</name>
        <dbReference type="ChEBI" id="CHEBI:30616"/>
    </ligand>
</feature>
<accession>B8IN27</accession>
<name>CLPX_METNO</name>
<dbReference type="EMBL" id="CP001349">
    <property type="protein sequence ID" value="ACL62143.1"/>
    <property type="molecule type" value="Genomic_DNA"/>
</dbReference>
<dbReference type="RefSeq" id="WP_015933701.1">
    <property type="nucleotide sequence ID" value="NC_011894.1"/>
</dbReference>
<dbReference type="SMR" id="B8IN27"/>
<dbReference type="STRING" id="460265.Mnod_7406"/>
<dbReference type="KEGG" id="mno:Mnod_7406"/>
<dbReference type="eggNOG" id="COG1219">
    <property type="taxonomic scope" value="Bacteria"/>
</dbReference>
<dbReference type="HOGENOM" id="CLU_014218_8_2_5"/>
<dbReference type="OrthoDB" id="9804062at2"/>
<dbReference type="Proteomes" id="UP000008207">
    <property type="component" value="Chromosome"/>
</dbReference>
<dbReference type="GO" id="GO:0009376">
    <property type="term" value="C:HslUV protease complex"/>
    <property type="evidence" value="ECO:0007669"/>
    <property type="project" value="TreeGrafter"/>
</dbReference>
<dbReference type="GO" id="GO:0005524">
    <property type="term" value="F:ATP binding"/>
    <property type="evidence" value="ECO:0007669"/>
    <property type="project" value="UniProtKB-UniRule"/>
</dbReference>
<dbReference type="GO" id="GO:0016887">
    <property type="term" value="F:ATP hydrolysis activity"/>
    <property type="evidence" value="ECO:0007669"/>
    <property type="project" value="InterPro"/>
</dbReference>
<dbReference type="GO" id="GO:0140662">
    <property type="term" value="F:ATP-dependent protein folding chaperone"/>
    <property type="evidence" value="ECO:0007669"/>
    <property type="project" value="InterPro"/>
</dbReference>
<dbReference type="GO" id="GO:0046983">
    <property type="term" value="F:protein dimerization activity"/>
    <property type="evidence" value="ECO:0007669"/>
    <property type="project" value="InterPro"/>
</dbReference>
<dbReference type="GO" id="GO:0051082">
    <property type="term" value="F:unfolded protein binding"/>
    <property type="evidence" value="ECO:0007669"/>
    <property type="project" value="UniProtKB-UniRule"/>
</dbReference>
<dbReference type="GO" id="GO:0008270">
    <property type="term" value="F:zinc ion binding"/>
    <property type="evidence" value="ECO:0007669"/>
    <property type="project" value="InterPro"/>
</dbReference>
<dbReference type="GO" id="GO:0051301">
    <property type="term" value="P:cell division"/>
    <property type="evidence" value="ECO:0007669"/>
    <property type="project" value="TreeGrafter"/>
</dbReference>
<dbReference type="GO" id="GO:0051603">
    <property type="term" value="P:proteolysis involved in protein catabolic process"/>
    <property type="evidence" value="ECO:0007669"/>
    <property type="project" value="TreeGrafter"/>
</dbReference>
<dbReference type="CDD" id="cd19497">
    <property type="entry name" value="RecA-like_ClpX"/>
    <property type="match status" value="1"/>
</dbReference>
<dbReference type="FunFam" id="1.10.8.60:FF:000002">
    <property type="entry name" value="ATP-dependent Clp protease ATP-binding subunit ClpX"/>
    <property type="match status" value="1"/>
</dbReference>
<dbReference type="FunFam" id="3.40.50.300:FF:000005">
    <property type="entry name" value="ATP-dependent Clp protease ATP-binding subunit ClpX"/>
    <property type="match status" value="1"/>
</dbReference>
<dbReference type="Gene3D" id="1.10.8.60">
    <property type="match status" value="1"/>
</dbReference>
<dbReference type="Gene3D" id="6.20.220.10">
    <property type="entry name" value="ClpX chaperone, C4-type zinc finger domain"/>
    <property type="match status" value="1"/>
</dbReference>
<dbReference type="Gene3D" id="3.40.50.300">
    <property type="entry name" value="P-loop containing nucleotide triphosphate hydrolases"/>
    <property type="match status" value="1"/>
</dbReference>
<dbReference type="HAMAP" id="MF_00175">
    <property type="entry name" value="ClpX"/>
    <property type="match status" value="1"/>
</dbReference>
<dbReference type="InterPro" id="IPR003593">
    <property type="entry name" value="AAA+_ATPase"/>
</dbReference>
<dbReference type="InterPro" id="IPR050052">
    <property type="entry name" value="ATP-dep_Clp_protease_ClpX"/>
</dbReference>
<dbReference type="InterPro" id="IPR003959">
    <property type="entry name" value="ATPase_AAA_core"/>
</dbReference>
<dbReference type="InterPro" id="IPR019489">
    <property type="entry name" value="Clp_ATPase_C"/>
</dbReference>
<dbReference type="InterPro" id="IPR004487">
    <property type="entry name" value="Clp_protease_ATP-bd_su_ClpX"/>
</dbReference>
<dbReference type="InterPro" id="IPR046425">
    <property type="entry name" value="ClpX_bact"/>
</dbReference>
<dbReference type="InterPro" id="IPR027417">
    <property type="entry name" value="P-loop_NTPase"/>
</dbReference>
<dbReference type="InterPro" id="IPR010603">
    <property type="entry name" value="Znf_CppX_C4"/>
</dbReference>
<dbReference type="InterPro" id="IPR038366">
    <property type="entry name" value="Znf_CppX_C4_sf"/>
</dbReference>
<dbReference type="NCBIfam" id="TIGR00382">
    <property type="entry name" value="clpX"/>
    <property type="match status" value="1"/>
</dbReference>
<dbReference type="NCBIfam" id="NF003745">
    <property type="entry name" value="PRK05342.1"/>
    <property type="match status" value="1"/>
</dbReference>
<dbReference type="PANTHER" id="PTHR48102:SF7">
    <property type="entry name" value="ATP-DEPENDENT CLP PROTEASE ATP-BINDING SUBUNIT CLPX-LIKE, MITOCHONDRIAL"/>
    <property type="match status" value="1"/>
</dbReference>
<dbReference type="PANTHER" id="PTHR48102">
    <property type="entry name" value="ATP-DEPENDENT CLP PROTEASE ATP-BINDING SUBUNIT CLPX-LIKE, MITOCHONDRIAL-RELATED"/>
    <property type="match status" value="1"/>
</dbReference>
<dbReference type="Pfam" id="PF07724">
    <property type="entry name" value="AAA_2"/>
    <property type="match status" value="1"/>
</dbReference>
<dbReference type="Pfam" id="PF10431">
    <property type="entry name" value="ClpB_D2-small"/>
    <property type="match status" value="1"/>
</dbReference>
<dbReference type="Pfam" id="PF06689">
    <property type="entry name" value="zf-C4_ClpX"/>
    <property type="match status" value="1"/>
</dbReference>
<dbReference type="SMART" id="SM00382">
    <property type="entry name" value="AAA"/>
    <property type="match status" value="1"/>
</dbReference>
<dbReference type="SMART" id="SM01086">
    <property type="entry name" value="ClpB_D2-small"/>
    <property type="match status" value="1"/>
</dbReference>
<dbReference type="SMART" id="SM00994">
    <property type="entry name" value="zf-C4_ClpX"/>
    <property type="match status" value="1"/>
</dbReference>
<dbReference type="SUPFAM" id="SSF57716">
    <property type="entry name" value="Glucocorticoid receptor-like (DNA-binding domain)"/>
    <property type="match status" value="1"/>
</dbReference>
<dbReference type="SUPFAM" id="SSF52540">
    <property type="entry name" value="P-loop containing nucleoside triphosphate hydrolases"/>
    <property type="match status" value="1"/>
</dbReference>
<dbReference type="PROSITE" id="PS51902">
    <property type="entry name" value="CLPX_ZB"/>
    <property type="match status" value="1"/>
</dbReference>
<reference key="1">
    <citation type="submission" date="2009-01" db="EMBL/GenBank/DDBJ databases">
        <title>Complete sequence of chromosome of Methylobacterium nodulans ORS 2060.</title>
        <authorList>
            <consortium name="US DOE Joint Genome Institute"/>
            <person name="Lucas S."/>
            <person name="Copeland A."/>
            <person name="Lapidus A."/>
            <person name="Glavina del Rio T."/>
            <person name="Dalin E."/>
            <person name="Tice H."/>
            <person name="Bruce D."/>
            <person name="Goodwin L."/>
            <person name="Pitluck S."/>
            <person name="Sims D."/>
            <person name="Brettin T."/>
            <person name="Detter J.C."/>
            <person name="Han C."/>
            <person name="Larimer F."/>
            <person name="Land M."/>
            <person name="Hauser L."/>
            <person name="Kyrpides N."/>
            <person name="Ivanova N."/>
            <person name="Marx C.J."/>
            <person name="Richardson P."/>
        </authorList>
    </citation>
    <scope>NUCLEOTIDE SEQUENCE [LARGE SCALE GENOMIC DNA]</scope>
    <source>
        <strain>LMG 21967 / CNCM I-2342 / ORS 2060</strain>
    </source>
</reference>
<keyword id="KW-0067">ATP-binding</keyword>
<keyword id="KW-0143">Chaperone</keyword>
<keyword id="KW-0479">Metal-binding</keyword>
<keyword id="KW-0547">Nucleotide-binding</keyword>
<keyword id="KW-1185">Reference proteome</keyword>
<keyword id="KW-0862">Zinc</keyword>
<proteinExistence type="inferred from homology"/>
<evidence type="ECO:0000255" key="1">
    <source>
        <dbReference type="HAMAP-Rule" id="MF_00175"/>
    </source>
</evidence>
<evidence type="ECO:0000255" key="2">
    <source>
        <dbReference type="PROSITE-ProRule" id="PRU01250"/>
    </source>
</evidence>
<comment type="function">
    <text evidence="1">ATP-dependent specificity component of the Clp protease. It directs the protease to specific substrates. Can perform chaperone functions in the absence of ClpP.</text>
</comment>
<comment type="subunit">
    <text evidence="1">Component of the ClpX-ClpP complex. Forms a hexameric ring that, in the presence of ATP, binds to fourteen ClpP subunits assembled into a disk-like structure with a central cavity, resembling the structure of eukaryotic proteasomes.</text>
</comment>
<comment type="similarity">
    <text evidence="1">Belongs to the ClpX chaperone family.</text>
</comment>
<sequence length="423" mass="46397">MSKAGGNDSKSTLYCSFCGKSQHEVRKLIAGPTVFICDECVELCMDIIREESKSSLVKSRDGVPTPKEIRRVLDDYVIGQDFAKKVLSVAVHNHYKRLAHAAKHNDVELAKSNILLIGPTGSGKTLLAQTLARILDVPFTMADATTLTEAGYVGEDVENIILKLLQASDYNVERAQRGIVYIDEIDKISRKSDNPSITRDVSGEGVQQALLKIMEGTVASVPPQGGRKHPQQEFLQVDTTNILFICGGAFAGLERIISARGKGTSIGFGATVQAPDDRRTGEIFRNVEPEDLLKFGLIPEFVGRLPVLATLEDLDEIALKRILQEPKNALVKQYQRLFEMENVDLTFQEEALTLVARKAIERKTGARGLRSILESILLETMYDLPGLDSVEQVVIGPEVVDGKARPLYIHGDRSKDAPASVSA</sequence>
<protein>
    <recommendedName>
        <fullName evidence="1">ATP-dependent Clp protease ATP-binding subunit ClpX</fullName>
    </recommendedName>
</protein>